<proteinExistence type="inferred from homology"/>
<organism>
    <name type="scientific">Campylobacter concisus (strain 13826)</name>
    <dbReference type="NCBI Taxonomy" id="360104"/>
    <lineage>
        <taxon>Bacteria</taxon>
        <taxon>Pseudomonadati</taxon>
        <taxon>Campylobacterota</taxon>
        <taxon>Epsilonproteobacteria</taxon>
        <taxon>Campylobacterales</taxon>
        <taxon>Campylobacteraceae</taxon>
        <taxon>Campylobacter</taxon>
    </lineage>
</organism>
<feature type="chain" id="PRO_1000007197" description="Large ribosomal subunit protein bL28">
    <location>
        <begin position="1"/>
        <end position="63"/>
    </location>
</feature>
<feature type="region of interest" description="Disordered" evidence="2">
    <location>
        <begin position="1"/>
        <end position="20"/>
    </location>
</feature>
<evidence type="ECO:0000255" key="1">
    <source>
        <dbReference type="HAMAP-Rule" id="MF_00373"/>
    </source>
</evidence>
<evidence type="ECO:0000256" key="2">
    <source>
        <dbReference type="SAM" id="MobiDB-lite"/>
    </source>
</evidence>
<evidence type="ECO:0000305" key="3"/>
<keyword id="KW-0687">Ribonucleoprotein</keyword>
<keyword id="KW-0689">Ribosomal protein</keyword>
<gene>
    <name evidence="1" type="primary">rpmB</name>
    <name type="ordered locus">Ccon26_08940</name>
    <name type="ORF">CCC13826_1345</name>
</gene>
<sequence>MSKRCAITGKGPMVGNNVSHANNKTKRRFLPNLRTIRVTLEDGTTRRIKVAASTLRTMKKQSN</sequence>
<protein>
    <recommendedName>
        <fullName evidence="1">Large ribosomal subunit protein bL28</fullName>
    </recommendedName>
    <alternativeName>
        <fullName evidence="3">50S ribosomal protein L28</fullName>
    </alternativeName>
</protein>
<accession>A7ZDA4</accession>
<name>RL28_CAMC1</name>
<comment type="similarity">
    <text evidence="1">Belongs to the bacterial ribosomal protein bL28 family.</text>
</comment>
<reference key="1">
    <citation type="submission" date="2007-10" db="EMBL/GenBank/DDBJ databases">
        <title>Genome sequence of Campylobacter concisus 13826 isolated from human feces.</title>
        <authorList>
            <person name="Fouts D.E."/>
            <person name="Mongodin E.F."/>
            <person name="Puiu D."/>
            <person name="Sebastian Y."/>
            <person name="Miller W.G."/>
            <person name="Mandrell R.E."/>
            <person name="On S."/>
            <person name="Nelson K.E."/>
        </authorList>
    </citation>
    <scope>NUCLEOTIDE SEQUENCE [LARGE SCALE GENOMIC DNA]</scope>
    <source>
        <strain>13826</strain>
    </source>
</reference>
<dbReference type="EMBL" id="CP000792">
    <property type="protein sequence ID" value="EAT97480.1"/>
    <property type="molecule type" value="Genomic_DNA"/>
</dbReference>
<dbReference type="RefSeq" id="WP_002942221.1">
    <property type="nucleotide sequence ID" value="NC_009802.2"/>
</dbReference>
<dbReference type="SMR" id="A7ZDA4"/>
<dbReference type="STRING" id="360104.CCC13826_1345"/>
<dbReference type="KEGG" id="cco:CCC13826_1345"/>
<dbReference type="eggNOG" id="COG0227">
    <property type="taxonomic scope" value="Bacteria"/>
</dbReference>
<dbReference type="HOGENOM" id="CLU_064548_7_2_7"/>
<dbReference type="OrthoDB" id="9805609at2"/>
<dbReference type="Proteomes" id="UP000001121">
    <property type="component" value="Chromosome"/>
</dbReference>
<dbReference type="GO" id="GO:1990904">
    <property type="term" value="C:ribonucleoprotein complex"/>
    <property type="evidence" value="ECO:0007669"/>
    <property type="project" value="UniProtKB-KW"/>
</dbReference>
<dbReference type="GO" id="GO:0005840">
    <property type="term" value="C:ribosome"/>
    <property type="evidence" value="ECO:0007669"/>
    <property type="project" value="UniProtKB-KW"/>
</dbReference>
<dbReference type="GO" id="GO:0003735">
    <property type="term" value="F:structural constituent of ribosome"/>
    <property type="evidence" value="ECO:0007669"/>
    <property type="project" value="InterPro"/>
</dbReference>
<dbReference type="GO" id="GO:0006412">
    <property type="term" value="P:translation"/>
    <property type="evidence" value="ECO:0007669"/>
    <property type="project" value="UniProtKB-UniRule"/>
</dbReference>
<dbReference type="Gene3D" id="2.20.150.30">
    <property type="match status" value="1"/>
</dbReference>
<dbReference type="Gene3D" id="2.30.170.40">
    <property type="entry name" value="Ribosomal protein L28/L24"/>
    <property type="match status" value="1"/>
</dbReference>
<dbReference type="HAMAP" id="MF_00373">
    <property type="entry name" value="Ribosomal_bL28"/>
    <property type="match status" value="1"/>
</dbReference>
<dbReference type="InterPro" id="IPR050096">
    <property type="entry name" value="Bacterial_rp_bL28"/>
</dbReference>
<dbReference type="InterPro" id="IPR026569">
    <property type="entry name" value="Ribosomal_bL28"/>
</dbReference>
<dbReference type="InterPro" id="IPR034704">
    <property type="entry name" value="Ribosomal_bL28/bL31-like_sf"/>
</dbReference>
<dbReference type="InterPro" id="IPR001383">
    <property type="entry name" value="Ribosomal_bL28_bact-type"/>
</dbReference>
<dbReference type="InterPro" id="IPR037147">
    <property type="entry name" value="Ribosomal_bL28_sf"/>
</dbReference>
<dbReference type="NCBIfam" id="TIGR00009">
    <property type="entry name" value="L28"/>
    <property type="match status" value="1"/>
</dbReference>
<dbReference type="PANTHER" id="PTHR39080">
    <property type="entry name" value="50S RIBOSOMAL PROTEIN L28"/>
    <property type="match status" value="1"/>
</dbReference>
<dbReference type="PANTHER" id="PTHR39080:SF1">
    <property type="entry name" value="LARGE RIBOSOMAL SUBUNIT PROTEIN BL28A"/>
    <property type="match status" value="1"/>
</dbReference>
<dbReference type="Pfam" id="PF00830">
    <property type="entry name" value="Ribosomal_L28"/>
    <property type="match status" value="1"/>
</dbReference>
<dbReference type="SUPFAM" id="SSF143800">
    <property type="entry name" value="L28p-like"/>
    <property type="match status" value="1"/>
</dbReference>